<name>KTU_DROVI</name>
<dbReference type="EMBL" id="CH940648">
    <property type="protein sequence ID" value="EDW59988.1"/>
    <property type="molecule type" value="Genomic_DNA"/>
</dbReference>
<dbReference type="RefSeq" id="XP_002048795.1">
    <property type="nucleotide sequence ID" value="XM_002048759.4"/>
</dbReference>
<dbReference type="RefSeq" id="XP_015029557.1">
    <property type="nucleotide sequence ID" value="XM_015174071.3"/>
</dbReference>
<dbReference type="SMR" id="B4LMK1"/>
<dbReference type="FunCoup" id="B4LMK1">
    <property type="interactions" value="378"/>
</dbReference>
<dbReference type="STRING" id="7244.B4LMK1"/>
<dbReference type="EnsemblMetazoa" id="FBtr0237049">
    <property type="protein sequence ID" value="FBpp0235541"/>
    <property type="gene ID" value="FBgn0208257"/>
</dbReference>
<dbReference type="EnsemblMetazoa" id="FBtr0437938">
    <property type="protein sequence ID" value="FBpp0394730"/>
    <property type="gene ID" value="FBgn0208257"/>
</dbReference>
<dbReference type="EnsemblMetazoa" id="XM_002048759.3">
    <property type="protein sequence ID" value="XP_002048795.1"/>
    <property type="gene ID" value="LOC6625677"/>
</dbReference>
<dbReference type="EnsemblMetazoa" id="XM_015174071.2">
    <property type="protein sequence ID" value="XP_015029557.1"/>
    <property type="gene ID" value="LOC6625677"/>
</dbReference>
<dbReference type="GeneID" id="6625677"/>
<dbReference type="KEGG" id="dvi:6625677"/>
<dbReference type="CTD" id="35730"/>
<dbReference type="eggNOG" id="KOG4356">
    <property type="taxonomic scope" value="Eukaryota"/>
</dbReference>
<dbReference type="HOGENOM" id="CLU_012715_0_0_1"/>
<dbReference type="InParanoid" id="B4LMK1"/>
<dbReference type="OMA" id="CFLNISK"/>
<dbReference type="OrthoDB" id="546764at2759"/>
<dbReference type="PhylomeDB" id="B4LMK1"/>
<dbReference type="Proteomes" id="UP000008792">
    <property type="component" value="Unassembled WGS sequence"/>
</dbReference>
<dbReference type="GO" id="GO:0005737">
    <property type="term" value="C:cytoplasm"/>
    <property type="evidence" value="ECO:0007669"/>
    <property type="project" value="UniProtKB-SubCell"/>
</dbReference>
<dbReference type="GO" id="GO:0008157">
    <property type="term" value="F:protein phosphatase 1 binding"/>
    <property type="evidence" value="ECO:0007669"/>
    <property type="project" value="EnsemblMetazoa"/>
</dbReference>
<dbReference type="GO" id="GO:0070286">
    <property type="term" value="P:axonemal dynein complex assembly"/>
    <property type="evidence" value="ECO:0007669"/>
    <property type="project" value="UniProtKB-UniRule"/>
</dbReference>
<dbReference type="GO" id="GO:0060285">
    <property type="term" value="P:cilium-dependent cell motility"/>
    <property type="evidence" value="ECO:0007669"/>
    <property type="project" value="UniProtKB-UniRule"/>
</dbReference>
<dbReference type="HAMAP" id="MF_03069">
    <property type="entry name" value="Kintoun"/>
    <property type="match status" value="1"/>
</dbReference>
<dbReference type="InterPro" id="IPR034727">
    <property type="entry name" value="Kintoun"/>
</dbReference>
<dbReference type="InterPro" id="IPR050734">
    <property type="entry name" value="PIH1/Kintoun_subfamily"/>
</dbReference>
<dbReference type="InterPro" id="IPR012981">
    <property type="entry name" value="PIH1_N"/>
</dbReference>
<dbReference type="InterPro" id="IPR041442">
    <property type="entry name" value="PIH1D1/2/3_CS-like"/>
</dbReference>
<dbReference type="PANTHER" id="PTHR22997">
    <property type="entry name" value="PIH1 DOMAIN-CONTAINING PROTEIN 1"/>
    <property type="match status" value="1"/>
</dbReference>
<dbReference type="PANTHER" id="PTHR22997:SF3">
    <property type="entry name" value="PROTEIN KINTOUN"/>
    <property type="match status" value="1"/>
</dbReference>
<dbReference type="Pfam" id="PF08190">
    <property type="entry name" value="PIH1"/>
    <property type="match status" value="1"/>
</dbReference>
<dbReference type="Pfam" id="PF18201">
    <property type="entry name" value="PIH1_CS"/>
    <property type="match status" value="1"/>
</dbReference>
<keyword id="KW-0963">Cytoplasm</keyword>
<keyword id="KW-0597">Phosphoprotein</keyword>
<keyword id="KW-1185">Reference proteome</keyword>
<accession>B4LMK1</accession>
<protein>
    <recommendedName>
        <fullName evidence="2">Protein kintoun</fullName>
    </recommendedName>
    <alternativeName>
        <fullName evidence="2">Dynein assembly factor 2, axonemal homolog</fullName>
    </alternativeName>
    <alternativeName>
        <fullName evidence="2">PP1-interacting protein 20</fullName>
    </alternativeName>
</protein>
<comment type="function">
    <text evidence="2">Required for cytoplasmic pre-assembly of axonemal dyneins, thereby playing a central role in motility in cilia and flagella. Involved in pre-assembly of dynein arm complexes in the cytoplasm before intraflagellar transport loads them for the ciliary compartment.</text>
</comment>
<comment type="subunit">
    <text evidence="2">Interacts with Pp1alpha-96A, Pp1-87B, Pp1-13C and flw.</text>
</comment>
<comment type="subcellular location">
    <subcellularLocation>
        <location evidence="2">Cytoplasm</location>
    </subcellularLocation>
</comment>
<comment type="similarity">
    <text evidence="2">Belongs to the PIH1 family. Kintoun subfamily.</text>
</comment>
<gene>
    <name evidence="2" type="primary">Nop17l</name>
    <name evidence="2" type="synonym">Ppi20</name>
    <name type="ORF">GJ21124</name>
</gene>
<sequence length="906" mass="102871">MSASTRNKHSKIHGNEKLDITTDEFDRIRQALSNEEFRKLFFDYVDEIQDPENRKLYEKEITQLEKERGVDVTFIHPQPGFVVKTSIDGELKCFINIASSTVVERPNNEVSVNSQTGQKGLSWSIPMAQTPPRDDLDANNKQCKVFDVVFHPDALHLGKRNAQFRQCLIDTALDGVEREYKVNLDRANLKFPKLDYKGLARPTVLRKLSKDATAEELEPHPLEHMYPKKPAANADQPKVLPMKTKVTPAPTFAVPKYSIKHSHDVDLAEYTDELDAKLQVTMPRALVVEIELPLLSSTADCQLDVTEKSVYLLSERQGAKYRLKLDLPYTVNDKAGNARFDTEHRRLCITLPVVRSTAREQRNLHDTVRVLTREDSGVELNSNGESPVEDEAEAEVEADAIVELQSHDQRDVSDAFPPTAVVSPRSFLKDNLHYKLPASFDCNILDNVIAFVLHVPNVQPDSVQTLQQARSLHLQFASMGSGYYPTHYAFLVQLPDGLEPQLQIDHIDVDAADENVVLRLYMNENCMLLPSYLAGPDSTDLKEYPVFGHFNNNNNNEKEYEGCSLASEKSLYINMDHNDLEHALEVSIMPQESTDPLDSIELLQQQQQQLQQLQQQKKLNKKQRKRNKKQRSLSESACEELKAAQEELQLQHEKQQQQQQLPSTPKDASPERLQNVSQPVDTLKLPQRKQRSYSECNESSSCVQRGILKRFSRYGPRPSISDSCSSIDDCSSTYSCSMDAPGMGFSQSFGGIPEERSGEGDVGLSESCKKTVRFNDHIMKQVFRLDSSILGQRKKNQKRRDCKLRAQQRRLSEGDSADYEEVEHGNGQQPPAHKTAANAQYFKQPNNNNGHDQDKNKKLSMHDSGLDLTNNNNHNNEEETKRNEADAKNAMMFEMDDDDEDEDEDM</sequence>
<evidence type="ECO:0000250" key="1">
    <source>
        <dbReference type="UniProtKB" id="Q0E9G3"/>
    </source>
</evidence>
<evidence type="ECO:0000255" key="2">
    <source>
        <dbReference type="HAMAP-Rule" id="MF_03069"/>
    </source>
</evidence>
<evidence type="ECO:0000256" key="3">
    <source>
        <dbReference type="SAM" id="MobiDB-lite"/>
    </source>
</evidence>
<reference key="1">
    <citation type="journal article" date="2007" name="Nature">
        <title>Evolution of genes and genomes on the Drosophila phylogeny.</title>
        <authorList>
            <consortium name="Drosophila 12 genomes consortium"/>
        </authorList>
    </citation>
    <scope>NUCLEOTIDE SEQUENCE [LARGE SCALE GENOMIC DNA]</scope>
    <source>
        <strain>Tucson 15010-1051.87</strain>
    </source>
</reference>
<feature type="chain" id="PRO_0000365812" description="Protein kintoun">
    <location>
        <begin position="1"/>
        <end position="906"/>
    </location>
</feature>
<feature type="region of interest" description="Disordered" evidence="3">
    <location>
        <begin position="614"/>
        <end position="691"/>
    </location>
</feature>
<feature type="region of interest" description="Disordered" evidence="3">
    <location>
        <begin position="793"/>
        <end position="906"/>
    </location>
</feature>
<feature type="compositionally biased region" description="Basic residues" evidence="3">
    <location>
        <begin position="618"/>
        <end position="631"/>
    </location>
</feature>
<feature type="compositionally biased region" description="Basic and acidic residues" evidence="3">
    <location>
        <begin position="639"/>
        <end position="655"/>
    </location>
</feature>
<feature type="compositionally biased region" description="Basic residues" evidence="3">
    <location>
        <begin position="793"/>
        <end position="808"/>
    </location>
</feature>
<feature type="compositionally biased region" description="Polar residues" evidence="3">
    <location>
        <begin position="837"/>
        <end position="850"/>
    </location>
</feature>
<feature type="compositionally biased region" description="Basic and acidic residues" evidence="3">
    <location>
        <begin position="851"/>
        <end position="865"/>
    </location>
</feature>
<feature type="compositionally biased region" description="Basic and acidic residues" evidence="3">
    <location>
        <begin position="875"/>
        <end position="887"/>
    </location>
</feature>
<feature type="compositionally biased region" description="Acidic residues" evidence="3">
    <location>
        <begin position="894"/>
        <end position="906"/>
    </location>
</feature>
<feature type="modified residue" description="Phosphoserine" evidence="1">
    <location>
        <position position="376"/>
    </location>
</feature>
<feature type="modified residue" description="Phosphoserine" evidence="1">
    <location>
        <position position="812"/>
    </location>
</feature>
<organism>
    <name type="scientific">Drosophila virilis</name>
    <name type="common">Fruit fly</name>
    <dbReference type="NCBI Taxonomy" id="7244"/>
    <lineage>
        <taxon>Eukaryota</taxon>
        <taxon>Metazoa</taxon>
        <taxon>Ecdysozoa</taxon>
        <taxon>Arthropoda</taxon>
        <taxon>Hexapoda</taxon>
        <taxon>Insecta</taxon>
        <taxon>Pterygota</taxon>
        <taxon>Neoptera</taxon>
        <taxon>Endopterygota</taxon>
        <taxon>Diptera</taxon>
        <taxon>Brachycera</taxon>
        <taxon>Muscomorpha</taxon>
        <taxon>Ephydroidea</taxon>
        <taxon>Drosophilidae</taxon>
        <taxon>Drosophila</taxon>
    </lineage>
</organism>
<proteinExistence type="inferred from homology"/>